<gene>
    <name type="primary">SODCC.2</name>
    <name type="synonym">SOD4AP</name>
</gene>
<sequence>MVKAVAVLGSSDGVKGTIFFTQEGDGPTAVTGSVSGLKPGLHGFHVHALGDTTNGCMSTGPHYNPASKEHGAPEDENRHAGDLGNVTAGADGVANINVTDSQIPLTGPNSIIGRAVVVHADPDDLGKGGHELSKSTGNAGGRVACGIIGLQG</sequence>
<protein>
    <recommendedName>
        <fullName>Superoxide dismutase [Cu-Zn] 4AP</fullName>
        <ecNumber>1.15.1.1</ecNumber>
    </recommendedName>
</protein>
<reference key="1">
    <citation type="journal article" date="1989" name="Mol. Gen. Genet.">
        <title>Two cDNAs encode two nearly identical Cu/Zn superoxide dismutase proteins in maize.</title>
        <authorList>
            <person name="Cannon R.E."/>
            <person name="Scandalios J.G."/>
        </authorList>
    </citation>
    <scope>NUCLEOTIDE SEQUENCE [MRNA]</scope>
</reference>
<keyword id="KW-0049">Antioxidant</keyword>
<keyword id="KW-0186">Copper</keyword>
<keyword id="KW-0963">Cytoplasm</keyword>
<keyword id="KW-1015">Disulfide bond</keyword>
<keyword id="KW-0479">Metal-binding</keyword>
<keyword id="KW-0560">Oxidoreductase</keyword>
<keyword id="KW-1185">Reference proteome</keyword>
<keyword id="KW-0862">Zinc</keyword>
<evidence type="ECO:0000250" key="1"/>
<evidence type="ECO:0000305" key="2"/>
<organism>
    <name type="scientific">Zea mays</name>
    <name type="common">Maize</name>
    <dbReference type="NCBI Taxonomy" id="4577"/>
    <lineage>
        <taxon>Eukaryota</taxon>
        <taxon>Viridiplantae</taxon>
        <taxon>Streptophyta</taxon>
        <taxon>Embryophyta</taxon>
        <taxon>Tracheophyta</taxon>
        <taxon>Spermatophyta</taxon>
        <taxon>Magnoliopsida</taxon>
        <taxon>Liliopsida</taxon>
        <taxon>Poales</taxon>
        <taxon>Poaceae</taxon>
        <taxon>PACMAD clade</taxon>
        <taxon>Panicoideae</taxon>
        <taxon>Andropogonodae</taxon>
        <taxon>Andropogoneae</taxon>
        <taxon>Tripsacinae</taxon>
        <taxon>Zea</taxon>
    </lineage>
</organism>
<feature type="initiator methionine" description="Removed" evidence="1">
    <location>
        <position position="1"/>
    </location>
</feature>
<feature type="chain" id="PRO_0000164143" description="Superoxide dismutase [Cu-Zn] 4AP">
    <location>
        <begin position="2"/>
        <end position="152"/>
    </location>
</feature>
<feature type="binding site" evidence="1">
    <location>
        <position position="45"/>
    </location>
    <ligand>
        <name>Cu cation</name>
        <dbReference type="ChEBI" id="CHEBI:23378"/>
        <note>catalytic</note>
    </ligand>
</feature>
<feature type="binding site" evidence="1">
    <location>
        <position position="47"/>
    </location>
    <ligand>
        <name>Cu cation</name>
        <dbReference type="ChEBI" id="CHEBI:23378"/>
        <note>catalytic</note>
    </ligand>
</feature>
<feature type="binding site" evidence="1">
    <location>
        <position position="62"/>
    </location>
    <ligand>
        <name>Cu cation</name>
        <dbReference type="ChEBI" id="CHEBI:23378"/>
        <note>catalytic</note>
    </ligand>
</feature>
<feature type="binding site" evidence="1">
    <location>
        <position position="62"/>
    </location>
    <ligand>
        <name>Zn(2+)</name>
        <dbReference type="ChEBI" id="CHEBI:29105"/>
        <note>structural</note>
    </ligand>
</feature>
<feature type="binding site" evidence="1">
    <location>
        <position position="70"/>
    </location>
    <ligand>
        <name>Zn(2+)</name>
        <dbReference type="ChEBI" id="CHEBI:29105"/>
        <note>structural</note>
    </ligand>
</feature>
<feature type="binding site" evidence="1">
    <location>
        <position position="79"/>
    </location>
    <ligand>
        <name>Zn(2+)</name>
        <dbReference type="ChEBI" id="CHEBI:29105"/>
        <note>structural</note>
    </ligand>
</feature>
<feature type="binding site" evidence="1">
    <location>
        <position position="82"/>
    </location>
    <ligand>
        <name>Zn(2+)</name>
        <dbReference type="ChEBI" id="CHEBI:29105"/>
        <note>structural</note>
    </ligand>
</feature>
<feature type="binding site" evidence="1">
    <location>
        <position position="119"/>
    </location>
    <ligand>
        <name>Cu cation</name>
        <dbReference type="ChEBI" id="CHEBI:23378"/>
        <note>catalytic</note>
    </ligand>
</feature>
<feature type="disulfide bond" evidence="1">
    <location>
        <begin position="56"/>
        <end position="145"/>
    </location>
</feature>
<name>SODC5_MAIZE</name>
<comment type="function">
    <text>Destroys radicals which are normally produced within the cells and which are toxic to biological systems.</text>
</comment>
<comment type="catalytic activity">
    <reaction>
        <text>2 superoxide + 2 H(+) = H2O2 + O2</text>
        <dbReference type="Rhea" id="RHEA:20696"/>
        <dbReference type="ChEBI" id="CHEBI:15378"/>
        <dbReference type="ChEBI" id="CHEBI:15379"/>
        <dbReference type="ChEBI" id="CHEBI:16240"/>
        <dbReference type="ChEBI" id="CHEBI:18421"/>
        <dbReference type="EC" id="1.15.1.1"/>
    </reaction>
</comment>
<comment type="cofactor">
    <cofactor evidence="1">
        <name>Cu cation</name>
        <dbReference type="ChEBI" id="CHEBI:23378"/>
    </cofactor>
    <text evidence="1">Binds 1 copper ion per subunit.</text>
</comment>
<comment type="cofactor">
    <cofactor evidence="1">
        <name>Zn(2+)</name>
        <dbReference type="ChEBI" id="CHEBI:29105"/>
    </cofactor>
    <text evidence="1">Binds 1 zinc ion per subunit.</text>
</comment>
<comment type="subunit">
    <text>Homodimer.</text>
</comment>
<comment type="subcellular location">
    <subcellularLocation>
        <location>Cytoplasm</location>
    </subcellularLocation>
</comment>
<comment type="similarity">
    <text evidence="2">Belongs to the Cu-Zn superoxide dismutase family.</text>
</comment>
<accession>P23346</accession>
<proteinExistence type="evidence at transcript level"/>
<dbReference type="EC" id="1.15.1.1"/>
<dbReference type="EMBL" id="X17565">
    <property type="protein sequence ID" value="CAB57992.1"/>
    <property type="status" value="ALT_SEQ"/>
    <property type="molecule type" value="mRNA"/>
</dbReference>
<dbReference type="RefSeq" id="NP_001105704.1">
    <property type="nucleotide sequence ID" value="NM_001112234.1"/>
</dbReference>
<dbReference type="RefSeq" id="XP_008660153.1">
    <property type="nucleotide sequence ID" value="XM_008661931.1"/>
</dbReference>
<dbReference type="SMR" id="P23346"/>
<dbReference type="FunCoup" id="P23346">
    <property type="interactions" value="2040"/>
</dbReference>
<dbReference type="STRING" id="4577.P23346"/>
<dbReference type="PaxDb" id="4577-GRMZM2G058522_P06"/>
<dbReference type="EnsemblPlants" id="Zm00001eb394700_T001">
    <property type="protein sequence ID" value="Zm00001eb394700_P001"/>
    <property type="gene ID" value="Zm00001eb394700"/>
</dbReference>
<dbReference type="EnsemblPlants" id="Zm00001eb394700_T002">
    <property type="protein sequence ID" value="Zm00001eb394700_P002"/>
    <property type="gene ID" value="Zm00001eb394700"/>
</dbReference>
<dbReference type="EnsemblPlants" id="Zm00001eb394700_T003">
    <property type="protein sequence ID" value="Zm00001eb394700_P003"/>
    <property type="gene ID" value="Zm00001eb394700"/>
</dbReference>
<dbReference type="EnsemblPlants" id="Zm00001eb394700_T005">
    <property type="protein sequence ID" value="Zm00001eb394700_P005"/>
    <property type="gene ID" value="Zm00001eb394700"/>
</dbReference>
<dbReference type="EnsemblPlants" id="Zm00001eb394700_T006">
    <property type="protein sequence ID" value="Zm00001eb394700_P006"/>
    <property type="gene ID" value="Zm00001eb394700"/>
</dbReference>
<dbReference type="EnsemblPlants" id="Zm00001eb394700_T007">
    <property type="protein sequence ID" value="Zm00001eb394700_P007"/>
    <property type="gene ID" value="Zm00001eb394700"/>
</dbReference>
<dbReference type="GeneID" id="542722"/>
<dbReference type="Gramene" id="Zm00001eb394700_T001">
    <property type="protein sequence ID" value="Zm00001eb394700_P001"/>
    <property type="gene ID" value="Zm00001eb394700"/>
</dbReference>
<dbReference type="Gramene" id="Zm00001eb394700_T002">
    <property type="protein sequence ID" value="Zm00001eb394700_P002"/>
    <property type="gene ID" value="Zm00001eb394700"/>
</dbReference>
<dbReference type="Gramene" id="Zm00001eb394700_T003">
    <property type="protein sequence ID" value="Zm00001eb394700_P003"/>
    <property type="gene ID" value="Zm00001eb394700"/>
</dbReference>
<dbReference type="Gramene" id="Zm00001eb394700_T005">
    <property type="protein sequence ID" value="Zm00001eb394700_P005"/>
    <property type="gene ID" value="Zm00001eb394700"/>
</dbReference>
<dbReference type="Gramene" id="Zm00001eb394700_T006">
    <property type="protein sequence ID" value="Zm00001eb394700_P006"/>
    <property type="gene ID" value="Zm00001eb394700"/>
</dbReference>
<dbReference type="Gramene" id="Zm00001eb394700_T007">
    <property type="protein sequence ID" value="Zm00001eb394700_P007"/>
    <property type="gene ID" value="Zm00001eb394700"/>
</dbReference>
<dbReference type="KEGG" id="zma:103639134"/>
<dbReference type="KEGG" id="zma:542722"/>
<dbReference type="MaizeGDB" id="47586"/>
<dbReference type="eggNOG" id="KOG0441">
    <property type="taxonomic scope" value="Eukaryota"/>
</dbReference>
<dbReference type="HOGENOM" id="CLU_056632_4_1_1"/>
<dbReference type="InParanoid" id="P23346"/>
<dbReference type="OMA" id="CGTIWIK"/>
<dbReference type="OrthoDB" id="2015551at2759"/>
<dbReference type="Proteomes" id="UP000007305">
    <property type="component" value="Chromosome 9"/>
</dbReference>
<dbReference type="ExpressionAtlas" id="P23346">
    <property type="expression patterns" value="baseline and differential"/>
</dbReference>
<dbReference type="GO" id="GO:0005737">
    <property type="term" value="C:cytoplasm"/>
    <property type="evidence" value="ECO:0007669"/>
    <property type="project" value="UniProtKB-SubCell"/>
</dbReference>
<dbReference type="GO" id="GO:0005507">
    <property type="term" value="F:copper ion binding"/>
    <property type="evidence" value="ECO:0000318"/>
    <property type="project" value="GO_Central"/>
</dbReference>
<dbReference type="GO" id="GO:0004784">
    <property type="term" value="F:superoxide dismutase activity"/>
    <property type="evidence" value="ECO:0000318"/>
    <property type="project" value="GO_Central"/>
</dbReference>
<dbReference type="GO" id="GO:0019430">
    <property type="term" value="P:removal of superoxide radicals"/>
    <property type="evidence" value="ECO:0000318"/>
    <property type="project" value="GO_Central"/>
</dbReference>
<dbReference type="CDD" id="cd00305">
    <property type="entry name" value="Cu-Zn_Superoxide_Dismutase"/>
    <property type="match status" value="1"/>
</dbReference>
<dbReference type="FunFam" id="2.60.40.200:FF:000001">
    <property type="entry name" value="Superoxide dismutase [Cu-Zn]"/>
    <property type="match status" value="1"/>
</dbReference>
<dbReference type="Gene3D" id="2.60.40.200">
    <property type="entry name" value="Superoxide dismutase, copper/zinc binding domain"/>
    <property type="match status" value="1"/>
</dbReference>
<dbReference type="InterPro" id="IPR036423">
    <property type="entry name" value="SOD-like_Cu/Zn_dom_sf"/>
</dbReference>
<dbReference type="InterPro" id="IPR024134">
    <property type="entry name" value="SOD_Cu/Zn_/chaperone"/>
</dbReference>
<dbReference type="InterPro" id="IPR018152">
    <property type="entry name" value="SOD_Cu/Zn_BS"/>
</dbReference>
<dbReference type="InterPro" id="IPR001424">
    <property type="entry name" value="SOD_Cu_Zn_dom"/>
</dbReference>
<dbReference type="PANTHER" id="PTHR10003">
    <property type="entry name" value="SUPEROXIDE DISMUTASE CU-ZN -RELATED"/>
    <property type="match status" value="1"/>
</dbReference>
<dbReference type="Pfam" id="PF00080">
    <property type="entry name" value="Sod_Cu"/>
    <property type="match status" value="1"/>
</dbReference>
<dbReference type="PRINTS" id="PR00068">
    <property type="entry name" value="CUZNDISMTASE"/>
</dbReference>
<dbReference type="SUPFAM" id="SSF49329">
    <property type="entry name" value="Cu,Zn superoxide dismutase-like"/>
    <property type="match status" value="1"/>
</dbReference>
<dbReference type="PROSITE" id="PS00087">
    <property type="entry name" value="SOD_CU_ZN_1"/>
    <property type="match status" value="1"/>
</dbReference>
<dbReference type="PROSITE" id="PS00332">
    <property type="entry name" value="SOD_CU_ZN_2"/>
    <property type="match status" value="1"/>
</dbReference>